<protein>
    <recommendedName>
        <fullName>Electron transfer flavoprotein subunit alpha</fullName>
        <shortName>Alpha-ETF</shortName>
    </recommendedName>
    <alternativeName>
        <fullName>Electron transfer flavoprotein large subunit</fullName>
        <shortName>ETFLS</shortName>
    </alternativeName>
</protein>
<name>ETFA_MYCTU</name>
<dbReference type="EMBL" id="AL123456">
    <property type="protein sequence ID" value="CCP45836.1"/>
    <property type="molecule type" value="Genomic_DNA"/>
</dbReference>
<dbReference type="PIR" id="G70858">
    <property type="entry name" value="G70858"/>
</dbReference>
<dbReference type="RefSeq" id="NP_217544.1">
    <property type="nucleotide sequence ID" value="NC_000962.3"/>
</dbReference>
<dbReference type="RefSeq" id="WP_003899889.1">
    <property type="nucleotide sequence ID" value="NZ_NVQJ01000011.1"/>
</dbReference>
<dbReference type="SMR" id="P9WNG9"/>
<dbReference type="FunCoup" id="P9WNG9">
    <property type="interactions" value="389"/>
</dbReference>
<dbReference type="STRING" id="83332.Rv3028c"/>
<dbReference type="PaxDb" id="83332-Rv3028c"/>
<dbReference type="DNASU" id="888549"/>
<dbReference type="GeneID" id="888549"/>
<dbReference type="KEGG" id="mtu:Rv3028c"/>
<dbReference type="KEGG" id="mtv:RVBD_3028c"/>
<dbReference type="TubercuList" id="Rv3028c"/>
<dbReference type="eggNOG" id="COG2025">
    <property type="taxonomic scope" value="Bacteria"/>
</dbReference>
<dbReference type="InParanoid" id="P9WNG9"/>
<dbReference type="OrthoDB" id="9770286at2"/>
<dbReference type="PhylomeDB" id="P9WNG9"/>
<dbReference type="Proteomes" id="UP000001584">
    <property type="component" value="Chromosome"/>
</dbReference>
<dbReference type="GO" id="GO:0005829">
    <property type="term" value="C:cytosol"/>
    <property type="evidence" value="ECO:0007005"/>
    <property type="project" value="MTBBASE"/>
</dbReference>
<dbReference type="GO" id="GO:0009274">
    <property type="term" value="C:peptidoglycan-based cell wall"/>
    <property type="evidence" value="ECO:0007005"/>
    <property type="project" value="MTBBASE"/>
</dbReference>
<dbReference type="GO" id="GO:0005886">
    <property type="term" value="C:plasma membrane"/>
    <property type="evidence" value="ECO:0007005"/>
    <property type="project" value="MTBBASE"/>
</dbReference>
<dbReference type="GO" id="GO:0009055">
    <property type="term" value="F:electron transfer activity"/>
    <property type="evidence" value="ECO:0000318"/>
    <property type="project" value="GO_Central"/>
</dbReference>
<dbReference type="GO" id="GO:0050660">
    <property type="term" value="F:flavin adenine dinucleotide binding"/>
    <property type="evidence" value="ECO:0000318"/>
    <property type="project" value="GO_Central"/>
</dbReference>
<dbReference type="GO" id="GO:0033539">
    <property type="term" value="P:fatty acid beta-oxidation using acyl-CoA dehydrogenase"/>
    <property type="evidence" value="ECO:0000318"/>
    <property type="project" value="GO_Central"/>
</dbReference>
<dbReference type="CDD" id="cd01715">
    <property type="entry name" value="ETF_alpha"/>
    <property type="match status" value="1"/>
</dbReference>
<dbReference type="FunFam" id="3.40.50.1220:FF:000022">
    <property type="entry name" value="Electron transfer flavoprotein, alpha subunit"/>
    <property type="match status" value="1"/>
</dbReference>
<dbReference type="Gene3D" id="3.40.50.620">
    <property type="entry name" value="HUPs"/>
    <property type="match status" value="1"/>
</dbReference>
<dbReference type="Gene3D" id="3.40.50.1220">
    <property type="entry name" value="TPP-binding domain"/>
    <property type="match status" value="1"/>
</dbReference>
<dbReference type="InterPro" id="IPR029035">
    <property type="entry name" value="DHS-like_NAD/FAD-binding_dom"/>
</dbReference>
<dbReference type="InterPro" id="IPR014730">
    <property type="entry name" value="ETF_a/b_N"/>
</dbReference>
<dbReference type="InterPro" id="IPR001308">
    <property type="entry name" value="ETF_a/FixB"/>
</dbReference>
<dbReference type="InterPro" id="IPR033947">
    <property type="entry name" value="ETF_alpha_N"/>
</dbReference>
<dbReference type="InterPro" id="IPR014731">
    <property type="entry name" value="ETF_asu_C"/>
</dbReference>
<dbReference type="InterPro" id="IPR018206">
    <property type="entry name" value="ETF_asu_C_CS"/>
</dbReference>
<dbReference type="InterPro" id="IPR014729">
    <property type="entry name" value="Rossmann-like_a/b/a_fold"/>
</dbReference>
<dbReference type="PANTHER" id="PTHR43153">
    <property type="entry name" value="ELECTRON TRANSFER FLAVOPROTEIN ALPHA"/>
    <property type="match status" value="1"/>
</dbReference>
<dbReference type="PANTHER" id="PTHR43153:SF1">
    <property type="entry name" value="ELECTRON TRANSFER FLAVOPROTEIN SUBUNIT ALPHA, MITOCHONDRIAL"/>
    <property type="match status" value="1"/>
</dbReference>
<dbReference type="Pfam" id="PF01012">
    <property type="entry name" value="ETF"/>
    <property type="match status" value="1"/>
</dbReference>
<dbReference type="Pfam" id="PF00766">
    <property type="entry name" value="ETF_alpha"/>
    <property type="match status" value="1"/>
</dbReference>
<dbReference type="PIRSF" id="PIRSF000089">
    <property type="entry name" value="Electra_flavoP_a"/>
    <property type="match status" value="1"/>
</dbReference>
<dbReference type="SMART" id="SM00893">
    <property type="entry name" value="ETF"/>
    <property type="match status" value="1"/>
</dbReference>
<dbReference type="SUPFAM" id="SSF52402">
    <property type="entry name" value="Adenine nucleotide alpha hydrolases-like"/>
    <property type="match status" value="1"/>
</dbReference>
<dbReference type="SUPFAM" id="SSF52467">
    <property type="entry name" value="DHS-like NAD/FAD-binding domain"/>
    <property type="match status" value="1"/>
</dbReference>
<dbReference type="PROSITE" id="PS00696">
    <property type="entry name" value="ETF_ALPHA"/>
    <property type="match status" value="1"/>
</dbReference>
<evidence type="ECO:0000250" key="1"/>
<evidence type="ECO:0000255" key="2"/>
<evidence type="ECO:0000305" key="3"/>
<proteinExistence type="evidence at protein level"/>
<accession>P9WNG9</accession>
<accession>L0TBC1</accession>
<accession>O53275</accession>
<organism>
    <name type="scientific">Mycobacterium tuberculosis (strain ATCC 25618 / H37Rv)</name>
    <dbReference type="NCBI Taxonomy" id="83332"/>
    <lineage>
        <taxon>Bacteria</taxon>
        <taxon>Bacillati</taxon>
        <taxon>Actinomycetota</taxon>
        <taxon>Actinomycetes</taxon>
        <taxon>Mycobacteriales</taxon>
        <taxon>Mycobacteriaceae</taxon>
        <taxon>Mycobacterium</taxon>
        <taxon>Mycobacterium tuberculosis complex</taxon>
    </lineage>
</organism>
<reference key="1">
    <citation type="journal article" date="1998" name="Nature">
        <title>Deciphering the biology of Mycobacterium tuberculosis from the complete genome sequence.</title>
        <authorList>
            <person name="Cole S.T."/>
            <person name="Brosch R."/>
            <person name="Parkhill J."/>
            <person name="Garnier T."/>
            <person name="Churcher C.M."/>
            <person name="Harris D.E."/>
            <person name="Gordon S.V."/>
            <person name="Eiglmeier K."/>
            <person name="Gas S."/>
            <person name="Barry C.E. III"/>
            <person name="Tekaia F."/>
            <person name="Badcock K."/>
            <person name="Basham D."/>
            <person name="Brown D."/>
            <person name="Chillingworth T."/>
            <person name="Connor R."/>
            <person name="Davies R.M."/>
            <person name="Devlin K."/>
            <person name="Feltwell T."/>
            <person name="Gentles S."/>
            <person name="Hamlin N."/>
            <person name="Holroyd S."/>
            <person name="Hornsby T."/>
            <person name="Jagels K."/>
            <person name="Krogh A."/>
            <person name="McLean J."/>
            <person name="Moule S."/>
            <person name="Murphy L.D."/>
            <person name="Oliver S."/>
            <person name="Osborne J."/>
            <person name="Quail M.A."/>
            <person name="Rajandream M.A."/>
            <person name="Rogers J."/>
            <person name="Rutter S."/>
            <person name="Seeger K."/>
            <person name="Skelton S."/>
            <person name="Squares S."/>
            <person name="Squares R."/>
            <person name="Sulston J.E."/>
            <person name="Taylor K."/>
            <person name="Whitehead S."/>
            <person name="Barrell B.G."/>
        </authorList>
    </citation>
    <scope>NUCLEOTIDE SEQUENCE [LARGE SCALE GENOMIC DNA]</scope>
    <source>
        <strain>ATCC 25618 / H37Rv</strain>
    </source>
</reference>
<reference key="2">
    <citation type="journal article" date="2011" name="Mol. Cell. Proteomics">
        <title>Proteogenomic analysis of Mycobacterium tuberculosis by high resolution mass spectrometry.</title>
        <authorList>
            <person name="Kelkar D.S."/>
            <person name="Kumar D."/>
            <person name="Kumar P."/>
            <person name="Balakrishnan L."/>
            <person name="Muthusamy B."/>
            <person name="Yadav A.K."/>
            <person name="Shrivastava P."/>
            <person name="Marimuthu A."/>
            <person name="Anand S."/>
            <person name="Sundaram H."/>
            <person name="Kingsbury R."/>
            <person name="Harsha H.C."/>
            <person name="Nair B."/>
            <person name="Prasad T.S."/>
            <person name="Chauhan D.S."/>
            <person name="Katoch K."/>
            <person name="Katoch V.M."/>
            <person name="Kumar P."/>
            <person name="Chaerkady R."/>
            <person name="Ramachandran S."/>
            <person name="Dash D."/>
            <person name="Pandey A."/>
        </authorList>
    </citation>
    <scope>IDENTIFICATION BY MASS SPECTROMETRY [LARGE SCALE ANALYSIS]</scope>
    <source>
        <strain>ATCC 25618 / H37Rv</strain>
    </source>
</reference>
<comment type="function">
    <text evidence="1">The electron transfer flavoprotein serves as a specific electron acceptor for other dehydrogenases. It transfers the electrons to the main respiratory chain via ETF-ubiquinone oxidoreductase (ETF dehydrogenase) (By similarity).</text>
</comment>
<comment type="cofactor">
    <cofactor evidence="1">
        <name>FAD</name>
        <dbReference type="ChEBI" id="CHEBI:57692"/>
    </cofactor>
    <text evidence="1">Binds 1 FAD per dimer.</text>
</comment>
<comment type="subunit">
    <text>Heterodimer of an alpha and a beta subunit.</text>
</comment>
<comment type="similarity">
    <text evidence="3">Belongs to the ETF alpha-subunit/FixB family.</text>
</comment>
<sequence length="318" mass="31691">MAEVLVLVEHAEGALKKVSAELITAARALGEPAAVVVGVPGTAAPLVDGLKAAGAAKIYVAESDLVDKYLITPAVDVLAGLAESSAPAGVLIAATADGKEIAGRLAARIGSGLLVDVVDVREGGVGVHSIFGGAFTVEAQANGDTPVITVRAGAVEAEPAAGAGEQVSVEVPAAAENAARITAREPAVAGDRPELTEATIVVAGGRGVGSAENFSVVEALADSLGAAVGASRAAVDSGYYPGQFQVGQTGKTVSPQLYIALGISGAIQHRAGMQTSKTIVAVNKDEEAPIFEIADYGVVGDLFKVAPQLTEAIKARKG</sequence>
<keyword id="KW-0249">Electron transport</keyword>
<keyword id="KW-0274">FAD</keyword>
<keyword id="KW-0285">Flavoprotein</keyword>
<keyword id="KW-1185">Reference proteome</keyword>
<keyword id="KW-0813">Transport</keyword>
<gene>
    <name type="primary">etfA</name>
    <name type="synonym">fixB</name>
    <name type="ordered locus">Rv3028c</name>
    <name type="ORF">MTV012.43c</name>
</gene>
<feature type="chain" id="PRO_0000167853" description="Electron transfer flavoprotein subunit alpha">
    <location>
        <begin position="1"/>
        <end position="318"/>
    </location>
</feature>
<feature type="binding site" evidence="2">
    <location>
        <begin position="257"/>
        <end position="285"/>
    </location>
    <ligand>
        <name>FAD</name>
        <dbReference type="ChEBI" id="CHEBI:57692"/>
    </ligand>
</feature>